<keyword id="KW-0067">ATP-binding</keyword>
<keyword id="KW-0143">Chaperone</keyword>
<keyword id="KW-0547">Nucleotide-binding</keyword>
<keyword id="KW-0597">Phosphoprotein</keyword>
<keyword id="KW-0346">Stress response</keyword>
<evidence type="ECO:0000250" key="1"/>
<evidence type="ECO:0000256" key="2">
    <source>
        <dbReference type="SAM" id="MobiDB-lite"/>
    </source>
</evidence>
<evidence type="ECO:0000305" key="3"/>
<reference key="1">
    <citation type="journal article" date="1993" name="Infect. Immun.">
        <title>Cloning, heterologous expression, and characterization of the Erysipelothrix rhusiopathiae DnaK protein.</title>
        <authorList>
            <person name="Partridge J."/>
            <person name="King J."/>
            <person name="Blum P."/>
        </authorList>
    </citation>
    <scope>NUCLEOTIDE SEQUENCE [GENOMIC DNA]</scope>
    <source>
        <strain>E1-6P</strain>
    </source>
</reference>
<reference key="2">
    <citation type="journal article" date="1993" name="FEMS Microbiol. Lett.">
        <title>Nucleotide sequence analysis and heterologous expression of the Erysipelothrix rhusiopathiae dnaJ gene.</title>
        <authorList>
            <person name="Rockabrand D."/>
            <person name="Partridge J."/>
            <person name="Krska J."/>
            <person name="Blum P."/>
        </authorList>
    </citation>
    <scope>NUCLEOTIDE SEQUENCE [GENOMIC DNA] OF 592-600</scope>
    <source>
        <strain>E1-6P</strain>
    </source>
</reference>
<feature type="chain" id="PRO_0000078463" description="Chaperone protein DnaK">
    <location>
        <begin position="1"/>
        <end position="600"/>
    </location>
</feature>
<feature type="region of interest" description="Disordered" evidence="2">
    <location>
        <begin position="569"/>
        <end position="600"/>
    </location>
</feature>
<feature type="compositionally biased region" description="Polar residues" evidence="2">
    <location>
        <begin position="569"/>
        <end position="589"/>
    </location>
</feature>
<feature type="compositionally biased region" description="Acidic residues" evidence="2">
    <location>
        <begin position="590"/>
        <end position="600"/>
    </location>
</feature>
<feature type="modified residue" description="Phosphothreonine; by autocatalysis" evidence="1">
    <location>
        <position position="173"/>
    </location>
</feature>
<sequence>MSKVIGIDLGTTNSAVSVMDGGEAKVITNPEGNRTTPSVVSFKNGERIVGDAAKRQVVTNPNSAVSVKRLIGTGEKVTLEGKDYTPEEISAMILGYMKSYAEDYLGEKVTKAVITVPAYFNDAQRQATKDAGKIAGLEVERIINEPTAAALAFGIDKTDKEEKVLVFDLGGGTFDVSILELADGTFEVLSTAGDNKLGGDDFDNIVVDYLVDIFKKENGIDLSSDKMAMQRLKEAAEKAKKDLSSTVNASISLPFISAGENGPLHLETTLSRAKFEEMTKSLVERTMVPVRQALKDAGLTKNDIHQVLLVGGSTRIPAVVEAVKNDLGKEPNKSVNPDEVVAMGAAIQGGVISGDGKDVLLLDVTPLSLGIETMGGVMTVLIERNTTIPTSKSQVFSTAADNQPAVDINVLQGERPMAKDNKSLGLFKLDGIAPAKRGIPQIEVTFDIDVNGIVNVSAMDKGTNKKQSITISNSSGLSDEEIERMVREAEENASEDLRLKEEAELKNRAEQFIHQIDESLASEDSPVDDAQKEEVTKLRDELQAAMDNNDFETLKEKLDQLEQAAQAMSQAMYEQQAGQAEVDASSSDETVVDAEFEEKN</sequence>
<accession>Q05647</accession>
<organism>
    <name type="scientific">Erysipelothrix rhusiopathiae</name>
    <dbReference type="NCBI Taxonomy" id="1648"/>
    <lineage>
        <taxon>Bacteria</taxon>
        <taxon>Bacillati</taxon>
        <taxon>Bacillota</taxon>
        <taxon>Erysipelotrichia</taxon>
        <taxon>Erysipelotrichales</taxon>
        <taxon>Erysipelotrichaceae</taxon>
        <taxon>Erysipelothrix</taxon>
    </lineage>
</organism>
<protein>
    <recommendedName>
        <fullName>Chaperone protein DnaK</fullName>
    </recommendedName>
    <alternativeName>
        <fullName>HSP70</fullName>
    </alternativeName>
    <alternativeName>
        <fullName>Heat shock 70 kDa protein</fullName>
    </alternativeName>
    <alternativeName>
        <fullName>Heat shock protein 70</fullName>
    </alternativeName>
</protein>
<gene>
    <name type="primary">dnaK</name>
</gene>
<dbReference type="EMBL" id="M98865">
    <property type="protein sequence ID" value="AAA24869.1"/>
    <property type="molecule type" value="Genomic_DNA"/>
</dbReference>
<dbReference type="EMBL" id="L08110">
    <property type="protein sequence ID" value="AAA71921.1"/>
    <property type="molecule type" value="Unassigned_DNA"/>
</dbReference>
<dbReference type="PIR" id="A49230">
    <property type="entry name" value="A49230"/>
</dbReference>
<dbReference type="SMR" id="Q05647"/>
<dbReference type="GO" id="GO:0005524">
    <property type="term" value="F:ATP binding"/>
    <property type="evidence" value="ECO:0007669"/>
    <property type="project" value="UniProtKB-UniRule"/>
</dbReference>
<dbReference type="GO" id="GO:0140662">
    <property type="term" value="F:ATP-dependent protein folding chaperone"/>
    <property type="evidence" value="ECO:0007669"/>
    <property type="project" value="InterPro"/>
</dbReference>
<dbReference type="GO" id="GO:0051082">
    <property type="term" value="F:unfolded protein binding"/>
    <property type="evidence" value="ECO:0007669"/>
    <property type="project" value="InterPro"/>
</dbReference>
<dbReference type="CDD" id="cd10234">
    <property type="entry name" value="ASKHA_NBD_HSP70_DnaK-like"/>
    <property type="match status" value="1"/>
</dbReference>
<dbReference type="FunFam" id="2.60.34.10:FF:000014">
    <property type="entry name" value="Chaperone protein DnaK HSP70"/>
    <property type="match status" value="1"/>
</dbReference>
<dbReference type="FunFam" id="3.30.420.40:FF:000071">
    <property type="entry name" value="Molecular chaperone DnaK"/>
    <property type="match status" value="1"/>
</dbReference>
<dbReference type="FunFam" id="3.90.640.10:FF:000003">
    <property type="entry name" value="Molecular chaperone DnaK"/>
    <property type="match status" value="1"/>
</dbReference>
<dbReference type="Gene3D" id="1.20.1270.10">
    <property type="match status" value="1"/>
</dbReference>
<dbReference type="Gene3D" id="3.30.420.40">
    <property type="match status" value="2"/>
</dbReference>
<dbReference type="Gene3D" id="3.90.640.10">
    <property type="entry name" value="Actin, Chain A, domain 4"/>
    <property type="match status" value="1"/>
</dbReference>
<dbReference type="Gene3D" id="2.60.34.10">
    <property type="entry name" value="Substrate Binding Domain Of DNAk, Chain A, domain 1"/>
    <property type="match status" value="1"/>
</dbReference>
<dbReference type="HAMAP" id="MF_00332">
    <property type="entry name" value="DnaK"/>
    <property type="match status" value="1"/>
</dbReference>
<dbReference type="InterPro" id="IPR043129">
    <property type="entry name" value="ATPase_NBD"/>
</dbReference>
<dbReference type="InterPro" id="IPR012725">
    <property type="entry name" value="Chaperone_DnaK"/>
</dbReference>
<dbReference type="InterPro" id="IPR018181">
    <property type="entry name" value="Heat_shock_70_CS"/>
</dbReference>
<dbReference type="InterPro" id="IPR029048">
    <property type="entry name" value="HSP70_C_sf"/>
</dbReference>
<dbReference type="InterPro" id="IPR029047">
    <property type="entry name" value="HSP70_peptide-bd_sf"/>
</dbReference>
<dbReference type="InterPro" id="IPR013126">
    <property type="entry name" value="Hsp_70_fam"/>
</dbReference>
<dbReference type="NCBIfam" id="NF001413">
    <property type="entry name" value="PRK00290.1"/>
    <property type="match status" value="1"/>
</dbReference>
<dbReference type="NCBIfam" id="TIGR02350">
    <property type="entry name" value="prok_dnaK"/>
    <property type="match status" value="1"/>
</dbReference>
<dbReference type="PANTHER" id="PTHR19375">
    <property type="entry name" value="HEAT SHOCK PROTEIN 70KDA"/>
    <property type="match status" value="1"/>
</dbReference>
<dbReference type="Pfam" id="PF00012">
    <property type="entry name" value="HSP70"/>
    <property type="match status" value="2"/>
</dbReference>
<dbReference type="PRINTS" id="PR00301">
    <property type="entry name" value="HEATSHOCK70"/>
</dbReference>
<dbReference type="SUPFAM" id="SSF53067">
    <property type="entry name" value="Actin-like ATPase domain"/>
    <property type="match status" value="2"/>
</dbReference>
<dbReference type="SUPFAM" id="SSF100934">
    <property type="entry name" value="Heat shock protein 70kD (HSP70), C-terminal subdomain"/>
    <property type="match status" value="1"/>
</dbReference>
<dbReference type="SUPFAM" id="SSF100920">
    <property type="entry name" value="Heat shock protein 70kD (HSP70), peptide-binding domain"/>
    <property type="match status" value="1"/>
</dbReference>
<dbReference type="PROSITE" id="PS00297">
    <property type="entry name" value="HSP70_1"/>
    <property type="match status" value="1"/>
</dbReference>
<dbReference type="PROSITE" id="PS00329">
    <property type="entry name" value="HSP70_2"/>
    <property type="match status" value="1"/>
</dbReference>
<dbReference type="PROSITE" id="PS01036">
    <property type="entry name" value="HSP70_3"/>
    <property type="match status" value="1"/>
</dbReference>
<name>DNAK_ERYRH</name>
<comment type="function">
    <text evidence="1">Acts as a chaperone.</text>
</comment>
<comment type="induction">
    <text evidence="1">By stress conditions e.g. heat shock (By similarity).</text>
</comment>
<comment type="similarity">
    <text evidence="3">Belongs to the heat shock protein 70 family.</text>
</comment>
<proteinExistence type="inferred from homology"/>